<comment type="function">
    <text evidence="1">Involved in cell division and chromosome segregation.</text>
</comment>
<comment type="similarity">
    <text evidence="1">Belongs to the WhiA family.</text>
</comment>
<comment type="sequence caution" evidence="2">
    <conflict type="erroneous initiation">
        <sequence resource="EMBL-CDS" id="AAU15432"/>
    </conflict>
</comment>
<evidence type="ECO:0000255" key="1">
    <source>
        <dbReference type="HAMAP-Rule" id="MF_01420"/>
    </source>
</evidence>
<evidence type="ECO:0000305" key="2"/>
<reference key="1">
    <citation type="journal article" date="2006" name="J. Bacteriol.">
        <title>Pathogenomic sequence analysis of Bacillus cereus and Bacillus thuringiensis isolates closely related to Bacillus anthracis.</title>
        <authorList>
            <person name="Han C.S."/>
            <person name="Xie G."/>
            <person name="Challacombe J.F."/>
            <person name="Altherr M.R."/>
            <person name="Bhotika S.S."/>
            <person name="Bruce D."/>
            <person name="Campbell C.S."/>
            <person name="Campbell M.L."/>
            <person name="Chen J."/>
            <person name="Chertkov O."/>
            <person name="Cleland C."/>
            <person name="Dimitrijevic M."/>
            <person name="Doggett N.A."/>
            <person name="Fawcett J.J."/>
            <person name="Glavina T."/>
            <person name="Goodwin L.A."/>
            <person name="Hill K.K."/>
            <person name="Hitchcock P."/>
            <person name="Jackson P.J."/>
            <person name="Keim P."/>
            <person name="Kewalramani A.R."/>
            <person name="Longmire J."/>
            <person name="Lucas S."/>
            <person name="Malfatti S."/>
            <person name="McMurry K."/>
            <person name="Meincke L.J."/>
            <person name="Misra M."/>
            <person name="Moseman B.L."/>
            <person name="Mundt M."/>
            <person name="Munk A.C."/>
            <person name="Okinaka R.T."/>
            <person name="Parson-Quintana B."/>
            <person name="Reilly L.P."/>
            <person name="Richardson P."/>
            <person name="Robinson D.L."/>
            <person name="Rubin E."/>
            <person name="Saunders E."/>
            <person name="Tapia R."/>
            <person name="Tesmer J.G."/>
            <person name="Thayer N."/>
            <person name="Thompson L.S."/>
            <person name="Tice H."/>
            <person name="Ticknor L.O."/>
            <person name="Wills P.L."/>
            <person name="Brettin T.S."/>
            <person name="Gilna P."/>
        </authorList>
    </citation>
    <scope>NUCLEOTIDE SEQUENCE [LARGE SCALE GENOMIC DNA]</scope>
    <source>
        <strain>ZK / E33L</strain>
    </source>
</reference>
<dbReference type="EMBL" id="CP000001">
    <property type="protein sequence ID" value="AAU15432.1"/>
    <property type="status" value="ALT_INIT"/>
    <property type="molecule type" value="Genomic_DNA"/>
</dbReference>
<dbReference type="RefSeq" id="WP_000006561.1">
    <property type="nucleotide sequence ID" value="NZ_CP009968.1"/>
</dbReference>
<dbReference type="SMR" id="Q631K0"/>
<dbReference type="GeneID" id="75088327"/>
<dbReference type="KEGG" id="bcz:BCE33L4846"/>
<dbReference type="PATRIC" id="fig|288681.22.peg.507"/>
<dbReference type="Proteomes" id="UP000002612">
    <property type="component" value="Chromosome"/>
</dbReference>
<dbReference type="GO" id="GO:0003677">
    <property type="term" value="F:DNA binding"/>
    <property type="evidence" value="ECO:0007669"/>
    <property type="project" value="UniProtKB-UniRule"/>
</dbReference>
<dbReference type="GO" id="GO:0051301">
    <property type="term" value="P:cell division"/>
    <property type="evidence" value="ECO:0007669"/>
    <property type="project" value="UniProtKB-UniRule"/>
</dbReference>
<dbReference type="GO" id="GO:0043937">
    <property type="term" value="P:regulation of sporulation"/>
    <property type="evidence" value="ECO:0007669"/>
    <property type="project" value="InterPro"/>
</dbReference>
<dbReference type="FunFam" id="3.10.28.10:FF:000002">
    <property type="entry name" value="Probable cell division protein WhiA"/>
    <property type="match status" value="1"/>
</dbReference>
<dbReference type="Gene3D" id="3.10.28.10">
    <property type="entry name" value="Homing endonucleases"/>
    <property type="match status" value="1"/>
</dbReference>
<dbReference type="HAMAP" id="MF_01420">
    <property type="entry name" value="HTH_type_WhiA"/>
    <property type="match status" value="1"/>
</dbReference>
<dbReference type="InterPro" id="IPR027434">
    <property type="entry name" value="Homing_endonucl"/>
</dbReference>
<dbReference type="InterPro" id="IPR018478">
    <property type="entry name" value="Sporu_reg_WhiA_N_dom"/>
</dbReference>
<dbReference type="InterPro" id="IPR003802">
    <property type="entry name" value="Sporulation_regulator_WhiA"/>
</dbReference>
<dbReference type="InterPro" id="IPR023054">
    <property type="entry name" value="Sporulation_regulator_WhiA_C"/>
</dbReference>
<dbReference type="InterPro" id="IPR039518">
    <property type="entry name" value="WhiA_LAGLIDADG_dom"/>
</dbReference>
<dbReference type="NCBIfam" id="TIGR00647">
    <property type="entry name" value="DNA_bind_WhiA"/>
    <property type="match status" value="1"/>
</dbReference>
<dbReference type="PANTHER" id="PTHR37307">
    <property type="entry name" value="CELL DIVISION PROTEIN WHIA-RELATED"/>
    <property type="match status" value="1"/>
</dbReference>
<dbReference type="PANTHER" id="PTHR37307:SF1">
    <property type="entry name" value="CELL DIVISION PROTEIN WHIA-RELATED"/>
    <property type="match status" value="1"/>
</dbReference>
<dbReference type="Pfam" id="PF02650">
    <property type="entry name" value="HTH_WhiA"/>
    <property type="match status" value="1"/>
</dbReference>
<dbReference type="Pfam" id="PF14527">
    <property type="entry name" value="LAGLIDADG_WhiA"/>
    <property type="match status" value="1"/>
</dbReference>
<dbReference type="Pfam" id="PF10298">
    <property type="entry name" value="WhiA_N"/>
    <property type="match status" value="1"/>
</dbReference>
<dbReference type="SUPFAM" id="SSF55608">
    <property type="entry name" value="Homing endonucleases"/>
    <property type="match status" value="1"/>
</dbReference>
<protein>
    <recommendedName>
        <fullName evidence="1">Probable cell division protein WhiA</fullName>
    </recommendedName>
</protein>
<keyword id="KW-0131">Cell cycle</keyword>
<keyword id="KW-0132">Cell division</keyword>
<keyword id="KW-0238">DNA-binding</keyword>
<feature type="chain" id="PRO_0000376436" description="Probable cell division protein WhiA">
    <location>
        <begin position="1"/>
        <end position="316"/>
    </location>
</feature>
<feature type="DNA-binding region" description="H-T-H motif" evidence="1">
    <location>
        <begin position="275"/>
        <end position="309"/>
    </location>
</feature>
<name>WHIA_BACCZ</name>
<proteinExistence type="inferred from homology"/>
<accession>Q631K0</accession>
<organism>
    <name type="scientific">Bacillus cereus (strain ZK / E33L)</name>
    <dbReference type="NCBI Taxonomy" id="288681"/>
    <lineage>
        <taxon>Bacteria</taxon>
        <taxon>Bacillati</taxon>
        <taxon>Bacillota</taxon>
        <taxon>Bacilli</taxon>
        <taxon>Bacillales</taxon>
        <taxon>Bacillaceae</taxon>
        <taxon>Bacillus</taxon>
        <taxon>Bacillus cereus group</taxon>
    </lineage>
</organism>
<gene>
    <name evidence="1" type="primary">whiA</name>
    <name type="ordered locus">BCE33L4846</name>
</gene>
<sequence>MSFASETKKELTNLEMKECCEKAELSALLRMNGSLSFSNRRLSIDIQTENAAIARRIYTLLKKGYDVTVELLVRKKMRLKKNNVYIVRLVEKSREILADLHIVRDDFSFIRNISQELIEKKCCKRSYLRGAFLAGGSVNNPETSSYHLEIFSLYKEHNDAICELMNGFDLNSKTLERRKGYITYLKEAEKITEFLNIIGAHNALLRFEDIRIVRDMRNSVNRLVNCETANLNKTIGAALRQIENIRYIDETVGLDILPDKLREIAQLRRDYQDVTLKELGEMVSGGKISKSGINHRLRKIDDIAEKLRAGETVAKK</sequence>